<sequence>MPTIQQLVRKGREVLVEKSKSPALDSCPQRRGVCVRVYTTTPKKPNSAMRKVARVRLTNQKEVNSYIPGEGHNLQEHSIVLVRGGRVKDLPGVRYHIVRGTLDTAGVAGRTQRRSKYGAKRPKPGQAAPAKKK</sequence>
<evidence type="ECO:0000250" key="1"/>
<evidence type="ECO:0000255" key="2">
    <source>
        <dbReference type="HAMAP-Rule" id="MF_00403"/>
    </source>
</evidence>
<evidence type="ECO:0000256" key="3">
    <source>
        <dbReference type="SAM" id="MobiDB-lite"/>
    </source>
</evidence>
<evidence type="ECO:0000305" key="4"/>
<gene>
    <name evidence="2" type="primary">rpsL</name>
    <name type="ordered locus">BT_2731</name>
</gene>
<name>RS12_BACTN</name>
<protein>
    <recommendedName>
        <fullName evidence="2">Small ribosomal subunit protein uS12</fullName>
    </recommendedName>
    <alternativeName>
        <fullName evidence="4">30S ribosomal protein S12</fullName>
    </alternativeName>
</protein>
<organism>
    <name type="scientific">Bacteroides thetaiotaomicron (strain ATCC 29148 / DSM 2079 / JCM 5827 / CCUG 10774 / NCTC 10582 / VPI-5482 / E50)</name>
    <dbReference type="NCBI Taxonomy" id="226186"/>
    <lineage>
        <taxon>Bacteria</taxon>
        <taxon>Pseudomonadati</taxon>
        <taxon>Bacteroidota</taxon>
        <taxon>Bacteroidia</taxon>
        <taxon>Bacteroidales</taxon>
        <taxon>Bacteroidaceae</taxon>
        <taxon>Bacteroides</taxon>
    </lineage>
</organism>
<accession>Q8A472</accession>
<proteinExistence type="inferred from homology"/>
<dbReference type="EMBL" id="AE015928">
    <property type="protein sequence ID" value="AAO77837.1"/>
    <property type="molecule type" value="Genomic_DNA"/>
</dbReference>
<dbReference type="RefSeq" id="NP_811643.1">
    <property type="nucleotide sequence ID" value="NC_004663.1"/>
</dbReference>
<dbReference type="RefSeq" id="WP_005675419.1">
    <property type="nucleotide sequence ID" value="NZ_UYXG01000001.1"/>
</dbReference>
<dbReference type="SMR" id="Q8A472"/>
<dbReference type="FunCoup" id="Q8A472">
    <property type="interactions" value="532"/>
</dbReference>
<dbReference type="STRING" id="226186.BT_2731"/>
<dbReference type="PaxDb" id="226186-BT_2731"/>
<dbReference type="EnsemblBacteria" id="AAO77837">
    <property type="protein sequence ID" value="AAO77837"/>
    <property type="gene ID" value="BT_2731"/>
</dbReference>
<dbReference type="GeneID" id="93105328"/>
<dbReference type="KEGG" id="bth:BT_2731"/>
<dbReference type="PATRIC" id="fig|226186.12.peg.2774"/>
<dbReference type="eggNOG" id="COG0048">
    <property type="taxonomic scope" value="Bacteria"/>
</dbReference>
<dbReference type="HOGENOM" id="CLU_104295_1_2_10"/>
<dbReference type="InParanoid" id="Q8A472"/>
<dbReference type="OrthoDB" id="9802366at2"/>
<dbReference type="Proteomes" id="UP000001414">
    <property type="component" value="Chromosome"/>
</dbReference>
<dbReference type="GO" id="GO:0005840">
    <property type="term" value="C:ribosome"/>
    <property type="evidence" value="ECO:0000318"/>
    <property type="project" value="GO_Central"/>
</dbReference>
<dbReference type="GO" id="GO:0015935">
    <property type="term" value="C:small ribosomal subunit"/>
    <property type="evidence" value="ECO:0007669"/>
    <property type="project" value="InterPro"/>
</dbReference>
<dbReference type="GO" id="GO:0019843">
    <property type="term" value="F:rRNA binding"/>
    <property type="evidence" value="ECO:0007669"/>
    <property type="project" value="UniProtKB-UniRule"/>
</dbReference>
<dbReference type="GO" id="GO:0003735">
    <property type="term" value="F:structural constituent of ribosome"/>
    <property type="evidence" value="ECO:0000318"/>
    <property type="project" value="GO_Central"/>
</dbReference>
<dbReference type="GO" id="GO:0000049">
    <property type="term" value="F:tRNA binding"/>
    <property type="evidence" value="ECO:0007669"/>
    <property type="project" value="UniProtKB-UniRule"/>
</dbReference>
<dbReference type="GO" id="GO:0006412">
    <property type="term" value="P:translation"/>
    <property type="evidence" value="ECO:0000318"/>
    <property type="project" value="GO_Central"/>
</dbReference>
<dbReference type="CDD" id="cd03368">
    <property type="entry name" value="Ribosomal_S12"/>
    <property type="match status" value="1"/>
</dbReference>
<dbReference type="FunFam" id="2.40.50.140:FF:000001">
    <property type="entry name" value="30S ribosomal protein S12"/>
    <property type="match status" value="1"/>
</dbReference>
<dbReference type="Gene3D" id="2.40.50.140">
    <property type="entry name" value="Nucleic acid-binding proteins"/>
    <property type="match status" value="1"/>
</dbReference>
<dbReference type="HAMAP" id="MF_00403_B">
    <property type="entry name" value="Ribosomal_uS12_B"/>
    <property type="match status" value="1"/>
</dbReference>
<dbReference type="InterPro" id="IPR012340">
    <property type="entry name" value="NA-bd_OB-fold"/>
</dbReference>
<dbReference type="InterPro" id="IPR006032">
    <property type="entry name" value="Ribosomal_uS12"/>
</dbReference>
<dbReference type="InterPro" id="IPR005679">
    <property type="entry name" value="Ribosomal_uS12_bac"/>
</dbReference>
<dbReference type="NCBIfam" id="TIGR00981">
    <property type="entry name" value="rpsL_bact"/>
    <property type="match status" value="1"/>
</dbReference>
<dbReference type="PANTHER" id="PTHR11652">
    <property type="entry name" value="30S RIBOSOMAL PROTEIN S12 FAMILY MEMBER"/>
    <property type="match status" value="1"/>
</dbReference>
<dbReference type="Pfam" id="PF00164">
    <property type="entry name" value="Ribosom_S12_S23"/>
    <property type="match status" value="1"/>
</dbReference>
<dbReference type="PIRSF" id="PIRSF002133">
    <property type="entry name" value="Ribosomal_S12/S23"/>
    <property type="match status" value="1"/>
</dbReference>
<dbReference type="PRINTS" id="PR01034">
    <property type="entry name" value="RIBOSOMALS12"/>
</dbReference>
<dbReference type="SUPFAM" id="SSF50249">
    <property type="entry name" value="Nucleic acid-binding proteins"/>
    <property type="match status" value="1"/>
</dbReference>
<dbReference type="PROSITE" id="PS00055">
    <property type="entry name" value="RIBOSOMAL_S12"/>
    <property type="match status" value="1"/>
</dbReference>
<keyword id="KW-0488">Methylation</keyword>
<keyword id="KW-1185">Reference proteome</keyword>
<keyword id="KW-0687">Ribonucleoprotein</keyword>
<keyword id="KW-0689">Ribosomal protein</keyword>
<keyword id="KW-0694">RNA-binding</keyword>
<keyword id="KW-0699">rRNA-binding</keyword>
<keyword id="KW-0820">tRNA-binding</keyword>
<reference key="1">
    <citation type="journal article" date="2003" name="Science">
        <title>A genomic view of the human-Bacteroides thetaiotaomicron symbiosis.</title>
        <authorList>
            <person name="Xu J."/>
            <person name="Bjursell M.K."/>
            <person name="Himrod J."/>
            <person name="Deng S."/>
            <person name="Carmichael L.K."/>
            <person name="Chiang H.C."/>
            <person name="Hooper L.V."/>
            <person name="Gordon J.I."/>
        </authorList>
    </citation>
    <scope>NUCLEOTIDE SEQUENCE [LARGE SCALE GENOMIC DNA]</scope>
    <source>
        <strain>ATCC 29148 / DSM 2079 / JCM 5827 / CCUG 10774 / NCTC 10582 / VPI-5482 / E50</strain>
    </source>
</reference>
<comment type="function">
    <text evidence="2">With S4 and S5 plays an important role in translational accuracy.</text>
</comment>
<comment type="function">
    <text evidence="2">Interacts with and stabilizes bases of the 16S rRNA that are involved in tRNA selection in the A site and with the mRNA backbone. Located at the interface of the 30S and 50S subunits, it traverses the body of the 30S subunit contacting proteins on the other side and probably holding the rRNA structure together. The combined cluster of proteins S8, S12 and S17 appears to hold together the shoulder and platform of the 30S subunit.</text>
</comment>
<comment type="subunit">
    <text evidence="2">Part of the 30S ribosomal subunit. Contacts proteins S8 and S17. May interact with IF1 in the 30S initiation complex.</text>
</comment>
<comment type="similarity">
    <text evidence="2">Belongs to the universal ribosomal protein uS12 family.</text>
</comment>
<feature type="chain" id="PRO_0000146179" description="Small ribosomal subunit protein uS12">
    <location>
        <begin position="1"/>
        <end position="133"/>
    </location>
</feature>
<feature type="region of interest" description="Disordered" evidence="3">
    <location>
        <begin position="103"/>
        <end position="133"/>
    </location>
</feature>
<feature type="compositionally biased region" description="Basic residues" evidence="3">
    <location>
        <begin position="111"/>
        <end position="123"/>
    </location>
</feature>
<feature type="compositionally biased region" description="Low complexity" evidence="3">
    <location>
        <begin position="124"/>
        <end position="133"/>
    </location>
</feature>
<feature type="modified residue" description="3-methylthioaspartic acid" evidence="1">
    <location>
        <position position="89"/>
    </location>
</feature>